<proteinExistence type="evidence at protein level"/>
<accession>Q9GYV9</accession>
<accession>A0JQ36</accession>
<reference key="1">
    <citation type="submission" date="2000-08" db="EMBL/GenBank/DDBJ databases">
        <title>Transcriptional coactivators in Drosophila.</title>
        <authorList>
            <person name="Tzeng D.L."/>
            <person name="Southworth J.W."/>
            <person name="Kennison J.A."/>
        </authorList>
    </citation>
    <scope>NUCLEOTIDE SEQUENCE [MRNA]</scope>
    <source>
        <strain>Canton-S</strain>
    </source>
</reference>
<reference key="2">
    <citation type="journal article" date="2000" name="Science">
        <title>The genome sequence of Drosophila melanogaster.</title>
        <authorList>
            <person name="Adams M.D."/>
            <person name="Celniker S.E."/>
            <person name="Holt R.A."/>
            <person name="Evans C.A."/>
            <person name="Gocayne J.D."/>
            <person name="Amanatides P.G."/>
            <person name="Scherer S.E."/>
            <person name="Li P.W."/>
            <person name="Hoskins R.A."/>
            <person name="Galle R.F."/>
            <person name="George R.A."/>
            <person name="Lewis S.E."/>
            <person name="Richards S."/>
            <person name="Ashburner M."/>
            <person name="Henderson S.N."/>
            <person name="Sutton G.G."/>
            <person name="Wortman J.R."/>
            <person name="Yandell M.D."/>
            <person name="Zhang Q."/>
            <person name="Chen L.X."/>
            <person name="Brandon R.C."/>
            <person name="Rogers Y.-H.C."/>
            <person name="Blazej R.G."/>
            <person name="Champe M."/>
            <person name="Pfeiffer B.D."/>
            <person name="Wan K.H."/>
            <person name="Doyle C."/>
            <person name="Baxter E.G."/>
            <person name="Helt G."/>
            <person name="Nelson C.R."/>
            <person name="Miklos G.L.G."/>
            <person name="Abril J.F."/>
            <person name="Agbayani A."/>
            <person name="An H.-J."/>
            <person name="Andrews-Pfannkoch C."/>
            <person name="Baldwin D."/>
            <person name="Ballew R.M."/>
            <person name="Basu A."/>
            <person name="Baxendale J."/>
            <person name="Bayraktaroglu L."/>
            <person name="Beasley E.M."/>
            <person name="Beeson K.Y."/>
            <person name="Benos P.V."/>
            <person name="Berman B.P."/>
            <person name="Bhandari D."/>
            <person name="Bolshakov S."/>
            <person name="Borkova D."/>
            <person name="Botchan M.R."/>
            <person name="Bouck J."/>
            <person name="Brokstein P."/>
            <person name="Brottier P."/>
            <person name="Burtis K.C."/>
            <person name="Busam D.A."/>
            <person name="Butler H."/>
            <person name="Cadieu E."/>
            <person name="Center A."/>
            <person name="Chandra I."/>
            <person name="Cherry J.M."/>
            <person name="Cawley S."/>
            <person name="Dahlke C."/>
            <person name="Davenport L.B."/>
            <person name="Davies P."/>
            <person name="de Pablos B."/>
            <person name="Delcher A."/>
            <person name="Deng Z."/>
            <person name="Mays A.D."/>
            <person name="Dew I."/>
            <person name="Dietz S.M."/>
            <person name="Dodson K."/>
            <person name="Doup L.E."/>
            <person name="Downes M."/>
            <person name="Dugan-Rocha S."/>
            <person name="Dunkov B.C."/>
            <person name="Dunn P."/>
            <person name="Durbin K.J."/>
            <person name="Evangelista C.C."/>
            <person name="Ferraz C."/>
            <person name="Ferriera S."/>
            <person name="Fleischmann W."/>
            <person name="Fosler C."/>
            <person name="Gabrielian A.E."/>
            <person name="Garg N.S."/>
            <person name="Gelbart W.M."/>
            <person name="Glasser K."/>
            <person name="Glodek A."/>
            <person name="Gong F."/>
            <person name="Gorrell J.H."/>
            <person name="Gu Z."/>
            <person name="Guan P."/>
            <person name="Harris M."/>
            <person name="Harris N.L."/>
            <person name="Harvey D.A."/>
            <person name="Heiman T.J."/>
            <person name="Hernandez J.R."/>
            <person name="Houck J."/>
            <person name="Hostin D."/>
            <person name="Houston K.A."/>
            <person name="Howland T.J."/>
            <person name="Wei M.-H."/>
            <person name="Ibegwam C."/>
            <person name="Jalali M."/>
            <person name="Kalush F."/>
            <person name="Karpen G.H."/>
            <person name="Ke Z."/>
            <person name="Kennison J.A."/>
            <person name="Ketchum K.A."/>
            <person name="Kimmel B.E."/>
            <person name="Kodira C.D."/>
            <person name="Kraft C.L."/>
            <person name="Kravitz S."/>
            <person name="Kulp D."/>
            <person name="Lai Z."/>
            <person name="Lasko P."/>
            <person name="Lei Y."/>
            <person name="Levitsky A.A."/>
            <person name="Li J.H."/>
            <person name="Li Z."/>
            <person name="Liang Y."/>
            <person name="Lin X."/>
            <person name="Liu X."/>
            <person name="Mattei B."/>
            <person name="McIntosh T.C."/>
            <person name="McLeod M.P."/>
            <person name="McPherson D."/>
            <person name="Merkulov G."/>
            <person name="Milshina N.V."/>
            <person name="Mobarry C."/>
            <person name="Morris J."/>
            <person name="Moshrefi A."/>
            <person name="Mount S.M."/>
            <person name="Moy M."/>
            <person name="Murphy B."/>
            <person name="Murphy L."/>
            <person name="Muzny D.M."/>
            <person name="Nelson D.L."/>
            <person name="Nelson D.R."/>
            <person name="Nelson K.A."/>
            <person name="Nixon K."/>
            <person name="Nusskern D.R."/>
            <person name="Pacleb J.M."/>
            <person name="Palazzolo M."/>
            <person name="Pittman G.S."/>
            <person name="Pan S."/>
            <person name="Pollard J."/>
            <person name="Puri V."/>
            <person name="Reese M.G."/>
            <person name="Reinert K."/>
            <person name="Remington K."/>
            <person name="Saunders R.D.C."/>
            <person name="Scheeler F."/>
            <person name="Shen H."/>
            <person name="Shue B.C."/>
            <person name="Siden-Kiamos I."/>
            <person name="Simpson M."/>
            <person name="Skupski M.P."/>
            <person name="Smith T.J."/>
            <person name="Spier E."/>
            <person name="Spradling A.C."/>
            <person name="Stapleton M."/>
            <person name="Strong R."/>
            <person name="Sun E."/>
            <person name="Svirskas R."/>
            <person name="Tector C."/>
            <person name="Turner R."/>
            <person name="Venter E."/>
            <person name="Wang A.H."/>
            <person name="Wang X."/>
            <person name="Wang Z.-Y."/>
            <person name="Wassarman D.A."/>
            <person name="Weinstock G.M."/>
            <person name="Weissenbach J."/>
            <person name="Williams S.M."/>
            <person name="Woodage T."/>
            <person name="Worley K.C."/>
            <person name="Wu D."/>
            <person name="Yang S."/>
            <person name="Yao Q.A."/>
            <person name="Ye J."/>
            <person name="Yeh R.-F."/>
            <person name="Zaveri J.S."/>
            <person name="Zhan M."/>
            <person name="Zhang G."/>
            <person name="Zhao Q."/>
            <person name="Zheng L."/>
            <person name="Zheng X.H."/>
            <person name="Zhong F.N."/>
            <person name="Zhong W."/>
            <person name="Zhou X."/>
            <person name="Zhu S.C."/>
            <person name="Zhu X."/>
            <person name="Smith H.O."/>
            <person name="Gibbs R.A."/>
            <person name="Myers E.W."/>
            <person name="Rubin G.M."/>
            <person name="Venter J.C."/>
        </authorList>
    </citation>
    <scope>NUCLEOTIDE SEQUENCE [LARGE SCALE GENOMIC DNA]</scope>
    <source>
        <strain>Berkeley</strain>
    </source>
</reference>
<reference key="3">
    <citation type="journal article" date="2002" name="Genome Biol.">
        <title>Annotation of the Drosophila melanogaster euchromatic genome: a systematic review.</title>
        <authorList>
            <person name="Misra S."/>
            <person name="Crosby M.A."/>
            <person name="Mungall C.J."/>
            <person name="Matthews B.B."/>
            <person name="Campbell K.S."/>
            <person name="Hradecky P."/>
            <person name="Huang Y."/>
            <person name="Kaminker J.S."/>
            <person name="Millburn G.H."/>
            <person name="Prochnik S.E."/>
            <person name="Smith C.D."/>
            <person name="Tupy J.L."/>
            <person name="Whitfield E.J."/>
            <person name="Bayraktaroglu L."/>
            <person name="Berman B.P."/>
            <person name="Bettencourt B.R."/>
            <person name="Celniker S.E."/>
            <person name="de Grey A.D.N.J."/>
            <person name="Drysdale R.A."/>
            <person name="Harris N.L."/>
            <person name="Richter J."/>
            <person name="Russo S."/>
            <person name="Schroeder A.J."/>
            <person name="Shu S.Q."/>
            <person name="Stapleton M."/>
            <person name="Yamada C."/>
            <person name="Ashburner M."/>
            <person name="Gelbart W.M."/>
            <person name="Rubin G.M."/>
            <person name="Lewis S.E."/>
        </authorList>
    </citation>
    <scope>GENOME REANNOTATION</scope>
    <source>
        <strain>Berkeley</strain>
    </source>
</reference>
<reference key="4">
    <citation type="submission" date="2005-05" db="EMBL/GenBank/DDBJ databases">
        <authorList>
            <person name="Stapleton M."/>
            <person name="Carlson J.W."/>
            <person name="Chavez C."/>
            <person name="Frise E."/>
            <person name="George R.A."/>
            <person name="Pacleb J.M."/>
            <person name="Park S."/>
            <person name="Wan K.H."/>
            <person name="Yu C."/>
            <person name="Celniker S.E."/>
        </authorList>
    </citation>
    <scope>NUCLEOTIDE SEQUENCE [LARGE SCALE MRNA]</scope>
</reference>
<reference key="5">
    <citation type="submission" date="2006-11" db="EMBL/GenBank/DDBJ databases">
        <authorList>
            <person name="Stapleton M."/>
            <person name="Carlson J.W."/>
            <person name="Frise E."/>
            <person name="Kapadia B."/>
            <person name="Park S."/>
            <person name="Wan K.H."/>
            <person name="Yu C."/>
            <person name="Celniker S.E."/>
        </authorList>
    </citation>
    <scope>NUCLEOTIDE SEQUENCE [LARGE SCALE MRNA]</scope>
</reference>
<reference key="6">
    <citation type="journal article" date="2004" name="Nucleic Acids Res.">
        <title>A high resolution protein interaction map of the yeast Mediator complex.</title>
        <authorList>
            <person name="Guglielmi B."/>
            <person name="van Berkum N.L."/>
            <person name="Klapholz B."/>
            <person name="Bijma T."/>
            <person name="Boube M."/>
            <person name="Boschiero C."/>
            <person name="Bourbon H.-M."/>
            <person name="Holstege F.C.P."/>
            <person name="Werner M."/>
        </authorList>
    </citation>
    <scope>INTERACTION WITH MED21</scope>
</reference>
<reference key="7">
    <citation type="journal article" date="2006" name="Genes Dev.">
        <title>Coactivator cross-talk specifies transcriptional output.</title>
        <authorList>
            <person name="Marr M.T. II"/>
            <person name="Isogai Y."/>
            <person name="Wright K.J."/>
            <person name="Tjian R."/>
        </authorList>
    </citation>
    <scope>FUNCTION</scope>
</reference>
<organism>
    <name type="scientific">Drosophila melanogaster</name>
    <name type="common">Fruit fly</name>
    <dbReference type="NCBI Taxonomy" id="7227"/>
    <lineage>
        <taxon>Eukaryota</taxon>
        <taxon>Metazoa</taxon>
        <taxon>Ecdysozoa</taxon>
        <taxon>Arthropoda</taxon>
        <taxon>Hexapoda</taxon>
        <taxon>Insecta</taxon>
        <taxon>Pterygota</taxon>
        <taxon>Neoptera</taxon>
        <taxon>Endopterygota</taxon>
        <taxon>Diptera</taxon>
        <taxon>Brachycera</taxon>
        <taxon>Muscomorpha</taxon>
        <taxon>Ephydroidea</taxon>
        <taxon>Drosophilidae</taxon>
        <taxon>Drosophila</taxon>
        <taxon>Sophophora</taxon>
    </lineage>
</organism>
<gene>
    <name type="primary">MED7</name>
    <name type="ORF">CG31390</name>
</gene>
<evidence type="ECO:0000250" key="1"/>
<evidence type="ECO:0000269" key="2">
    <source>
    </source>
</evidence>
<evidence type="ECO:0000269" key="3">
    <source>
    </source>
</evidence>
<evidence type="ECO:0000305" key="4"/>
<sequence length="220" mass="25707">MSNQETQVSSLPMPPERYIANYTDENIRRNRAPRPPPPPAQHEVYSMFGIQYNNDEMIRSLESQNIKRLIPIHFDRRKELKKLNHSLLVNFLDLIDFLILNPDSPRRTEKIDDISLLFVNMHHLLNEFRPHQARETLRVMMEMQKRQRVETAARFQKHLERVREIVNTAFSALPVLDDDDDSGGAKIKTEVDPLEANAAAKNDPSYQHDRMLCKLVDAIE</sequence>
<name>MED7_DROME</name>
<keyword id="KW-0010">Activator</keyword>
<keyword id="KW-0539">Nucleus</keyword>
<keyword id="KW-1185">Reference proteome</keyword>
<keyword id="KW-0804">Transcription</keyword>
<keyword id="KW-0805">Transcription regulation</keyword>
<dbReference type="EMBL" id="AF293979">
    <property type="protein sequence ID" value="AAG02229.1"/>
    <property type="molecule type" value="mRNA"/>
</dbReference>
<dbReference type="EMBL" id="AE014297">
    <property type="protein sequence ID" value="AAN13483.1"/>
    <property type="molecule type" value="Genomic_DNA"/>
</dbReference>
<dbReference type="EMBL" id="BT023304">
    <property type="protein sequence ID" value="AAY55720.1"/>
    <property type="molecule type" value="mRNA"/>
</dbReference>
<dbReference type="EMBL" id="BT029406">
    <property type="protein sequence ID" value="ABK57063.1"/>
    <property type="status" value="ALT_INIT"/>
    <property type="molecule type" value="mRNA"/>
</dbReference>
<dbReference type="RefSeq" id="NP_731500.1">
    <property type="nucleotide sequence ID" value="NM_169357.2"/>
</dbReference>
<dbReference type="SMR" id="Q9GYV9"/>
<dbReference type="BioGRID" id="66432">
    <property type="interactions" value="39"/>
</dbReference>
<dbReference type="ComplexPortal" id="CPX-2308">
    <property type="entry name" value="Core mediator complex"/>
</dbReference>
<dbReference type="FunCoup" id="Q9GYV9">
    <property type="interactions" value="1780"/>
</dbReference>
<dbReference type="IntAct" id="Q9GYV9">
    <property type="interactions" value="54"/>
</dbReference>
<dbReference type="STRING" id="7227.FBpp0081787"/>
<dbReference type="PaxDb" id="7227-FBpp0081787"/>
<dbReference type="DNASU" id="41288"/>
<dbReference type="EnsemblMetazoa" id="FBtr0082311">
    <property type="protein sequence ID" value="FBpp0081787"/>
    <property type="gene ID" value="FBgn0051390"/>
</dbReference>
<dbReference type="GeneID" id="41288"/>
<dbReference type="KEGG" id="dme:Dmel_CG31390"/>
<dbReference type="AGR" id="FB:FBgn0051390"/>
<dbReference type="CTD" id="9443"/>
<dbReference type="FlyBase" id="FBgn0051390">
    <property type="gene designation" value="MED7"/>
</dbReference>
<dbReference type="VEuPathDB" id="VectorBase:FBgn0051390"/>
<dbReference type="eggNOG" id="KOG0570">
    <property type="taxonomic scope" value="Eukaryota"/>
</dbReference>
<dbReference type="GeneTree" id="ENSGT00940000165241"/>
<dbReference type="HOGENOM" id="CLU_065214_2_0_1"/>
<dbReference type="InParanoid" id="Q9GYV9"/>
<dbReference type="OMA" id="IHDSYSM"/>
<dbReference type="OrthoDB" id="10253553at2759"/>
<dbReference type="PhylomeDB" id="Q9GYV9"/>
<dbReference type="BioGRID-ORCS" id="41288">
    <property type="hits" value="0 hits in 1 CRISPR screen"/>
</dbReference>
<dbReference type="GenomeRNAi" id="41288"/>
<dbReference type="PRO" id="PR:Q9GYV9"/>
<dbReference type="Proteomes" id="UP000000803">
    <property type="component" value="Chromosome 3R"/>
</dbReference>
<dbReference type="Bgee" id="FBgn0051390">
    <property type="expression patterns" value="Expressed in T neuron T4a (Drosophila) in embryonic/larval optic lobe (Drosophila) and 93 other cell types or tissues"/>
</dbReference>
<dbReference type="GO" id="GO:0070847">
    <property type="term" value="C:core mediator complex"/>
    <property type="evidence" value="ECO:0000318"/>
    <property type="project" value="GO_Central"/>
</dbReference>
<dbReference type="GO" id="GO:0016592">
    <property type="term" value="C:mediator complex"/>
    <property type="evidence" value="ECO:0000318"/>
    <property type="project" value="GO_Central"/>
</dbReference>
<dbReference type="GO" id="GO:0003712">
    <property type="term" value="F:transcription coregulator activity"/>
    <property type="evidence" value="ECO:0000315"/>
    <property type="project" value="UniProtKB"/>
</dbReference>
<dbReference type="GO" id="GO:0006357">
    <property type="term" value="P:regulation of transcription by RNA polymerase II"/>
    <property type="evidence" value="ECO:0000315"/>
    <property type="project" value="UniProtKB"/>
</dbReference>
<dbReference type="Gene3D" id="6.10.140.200">
    <property type="match status" value="1"/>
</dbReference>
<dbReference type="InterPro" id="IPR037212">
    <property type="entry name" value="Med7/Med21-like"/>
</dbReference>
<dbReference type="InterPro" id="IPR009244">
    <property type="entry name" value="Mediatior_Med7"/>
</dbReference>
<dbReference type="InterPro" id="IPR044888">
    <property type="entry name" value="Mediatior_Med7_sf"/>
</dbReference>
<dbReference type="PANTHER" id="PTHR21428">
    <property type="entry name" value="MEDIATOR OF RNA POLYMERASE II TRANSCRIPTION SUBUNIT 7"/>
    <property type="match status" value="1"/>
</dbReference>
<dbReference type="PANTHER" id="PTHR21428:SF11">
    <property type="entry name" value="MEDIATOR OF RNA POLYMERASE II TRANSCRIPTION SUBUNIT 7"/>
    <property type="match status" value="1"/>
</dbReference>
<dbReference type="Pfam" id="PF05983">
    <property type="entry name" value="Med7"/>
    <property type="match status" value="1"/>
</dbReference>
<dbReference type="SUPFAM" id="SSF140718">
    <property type="entry name" value="Mediator hinge subcomplex-like"/>
    <property type="match status" value="1"/>
</dbReference>
<comment type="function">
    <text evidence="1 3">Component of the Mediator complex, a coactivator involved in the regulated transcription of nearly all RNA polymerase II-dependent genes. Mediator functions as a bridge to convey information from gene-specific regulatory proteins to the basal RNA polymerase II transcription machinery. Mediator is recruited to promoters by direct interactions with regulatory proteins and serves as a scaffold for the assembly of a functional preinitiation complex with RNA polymerase II and the general transcription factors (By similarity). Required for activated transcription of the MtnA, MtnB and MtnD genes.</text>
</comment>
<comment type="subunit">
    <text evidence="1 2">Component of the Mediator complex (By similarity). Interacts with MED21.</text>
</comment>
<comment type="subcellular location">
    <subcellularLocation>
        <location evidence="1">Nucleus</location>
    </subcellularLocation>
</comment>
<comment type="similarity">
    <text evidence="4">Belongs to the Mediator complex subunit 7 family.</text>
</comment>
<comment type="sequence caution" evidence="4">
    <conflict type="erroneous initiation">
        <sequence resource="EMBL-CDS" id="ABK57063"/>
    </conflict>
</comment>
<feature type="chain" id="PRO_0000303189" description="Mediator of RNA polymerase II transcription subunit 7">
    <location>
        <begin position="1"/>
        <end position="220"/>
    </location>
</feature>
<protein>
    <recommendedName>
        <fullName>Mediator of RNA polymerase II transcription subunit 7</fullName>
    </recommendedName>
    <alternativeName>
        <fullName>Mediator complex subunit 7</fullName>
    </alternativeName>
    <alternativeName>
        <fullName>dMED7</fullName>
    </alternativeName>
</protein>